<dbReference type="EMBL" id="CP001025">
    <property type="protein sequence ID" value="ACB64898.1"/>
    <property type="molecule type" value="Genomic_DNA"/>
</dbReference>
<dbReference type="RefSeq" id="WP_004186391.1">
    <property type="nucleotide sequence ID" value="NC_010551.1"/>
</dbReference>
<dbReference type="SMR" id="B1YV94"/>
<dbReference type="GeneID" id="98107656"/>
<dbReference type="KEGG" id="bac:BamMC406_2420"/>
<dbReference type="HOGENOM" id="CLU_064548_3_1_4"/>
<dbReference type="OrthoDB" id="9805609at2"/>
<dbReference type="Proteomes" id="UP000001680">
    <property type="component" value="Chromosome 1"/>
</dbReference>
<dbReference type="GO" id="GO:0022625">
    <property type="term" value="C:cytosolic large ribosomal subunit"/>
    <property type="evidence" value="ECO:0007669"/>
    <property type="project" value="TreeGrafter"/>
</dbReference>
<dbReference type="GO" id="GO:0003735">
    <property type="term" value="F:structural constituent of ribosome"/>
    <property type="evidence" value="ECO:0007669"/>
    <property type="project" value="InterPro"/>
</dbReference>
<dbReference type="GO" id="GO:0006412">
    <property type="term" value="P:translation"/>
    <property type="evidence" value="ECO:0007669"/>
    <property type="project" value="UniProtKB-UniRule"/>
</dbReference>
<dbReference type="FunFam" id="2.30.170.40:FF:000001">
    <property type="entry name" value="50S ribosomal protein L28"/>
    <property type="match status" value="1"/>
</dbReference>
<dbReference type="Gene3D" id="2.30.170.40">
    <property type="entry name" value="Ribosomal protein L28/L24"/>
    <property type="match status" value="1"/>
</dbReference>
<dbReference type="HAMAP" id="MF_00373">
    <property type="entry name" value="Ribosomal_bL28"/>
    <property type="match status" value="1"/>
</dbReference>
<dbReference type="InterPro" id="IPR026569">
    <property type="entry name" value="Ribosomal_bL28"/>
</dbReference>
<dbReference type="InterPro" id="IPR034704">
    <property type="entry name" value="Ribosomal_bL28/bL31-like_sf"/>
</dbReference>
<dbReference type="InterPro" id="IPR001383">
    <property type="entry name" value="Ribosomal_bL28_bact-type"/>
</dbReference>
<dbReference type="InterPro" id="IPR037147">
    <property type="entry name" value="Ribosomal_bL28_sf"/>
</dbReference>
<dbReference type="NCBIfam" id="TIGR00009">
    <property type="entry name" value="L28"/>
    <property type="match status" value="1"/>
</dbReference>
<dbReference type="PANTHER" id="PTHR13528">
    <property type="entry name" value="39S RIBOSOMAL PROTEIN L28, MITOCHONDRIAL"/>
    <property type="match status" value="1"/>
</dbReference>
<dbReference type="PANTHER" id="PTHR13528:SF2">
    <property type="entry name" value="LARGE RIBOSOMAL SUBUNIT PROTEIN BL28M"/>
    <property type="match status" value="1"/>
</dbReference>
<dbReference type="Pfam" id="PF00830">
    <property type="entry name" value="Ribosomal_L28"/>
    <property type="match status" value="1"/>
</dbReference>
<dbReference type="SUPFAM" id="SSF143800">
    <property type="entry name" value="L28p-like"/>
    <property type="match status" value="1"/>
</dbReference>
<name>RL28_BURA4</name>
<comment type="similarity">
    <text evidence="1">Belongs to the bacterial ribosomal protein bL28 family.</text>
</comment>
<keyword id="KW-0687">Ribonucleoprotein</keyword>
<keyword id="KW-0689">Ribosomal protein</keyword>
<gene>
    <name evidence="1" type="primary">rpmB</name>
    <name type="ordered locus">BamMC406_2420</name>
</gene>
<evidence type="ECO:0000255" key="1">
    <source>
        <dbReference type="HAMAP-Rule" id="MF_00373"/>
    </source>
</evidence>
<evidence type="ECO:0000256" key="2">
    <source>
        <dbReference type="SAM" id="MobiDB-lite"/>
    </source>
</evidence>
<evidence type="ECO:0000305" key="3"/>
<sequence>MARVCQVTGKAPMSGNNVSHANNKTKRRFLPNLQNRRFWVESENRWVRLRVSNAGLRLIDKNGIDSVLADLRARGEA</sequence>
<proteinExistence type="inferred from homology"/>
<organism>
    <name type="scientific">Burkholderia ambifaria (strain MC40-6)</name>
    <dbReference type="NCBI Taxonomy" id="398577"/>
    <lineage>
        <taxon>Bacteria</taxon>
        <taxon>Pseudomonadati</taxon>
        <taxon>Pseudomonadota</taxon>
        <taxon>Betaproteobacteria</taxon>
        <taxon>Burkholderiales</taxon>
        <taxon>Burkholderiaceae</taxon>
        <taxon>Burkholderia</taxon>
        <taxon>Burkholderia cepacia complex</taxon>
    </lineage>
</organism>
<reference key="1">
    <citation type="submission" date="2008-04" db="EMBL/GenBank/DDBJ databases">
        <title>Complete sequence of chromosome 1 of Burkholderia ambifaria MC40-6.</title>
        <authorList>
            <person name="Copeland A."/>
            <person name="Lucas S."/>
            <person name="Lapidus A."/>
            <person name="Glavina del Rio T."/>
            <person name="Dalin E."/>
            <person name="Tice H."/>
            <person name="Pitluck S."/>
            <person name="Chain P."/>
            <person name="Malfatti S."/>
            <person name="Shin M."/>
            <person name="Vergez L."/>
            <person name="Lang D."/>
            <person name="Schmutz J."/>
            <person name="Larimer F."/>
            <person name="Land M."/>
            <person name="Hauser L."/>
            <person name="Kyrpides N."/>
            <person name="Lykidis A."/>
            <person name="Ramette A."/>
            <person name="Konstantinidis K."/>
            <person name="Tiedje J."/>
            <person name="Richardson P."/>
        </authorList>
    </citation>
    <scope>NUCLEOTIDE SEQUENCE [LARGE SCALE GENOMIC DNA]</scope>
    <source>
        <strain>MC40-6</strain>
    </source>
</reference>
<accession>B1YV94</accession>
<feature type="chain" id="PRO_1000121594" description="Large ribosomal subunit protein bL28">
    <location>
        <begin position="1"/>
        <end position="77"/>
    </location>
</feature>
<feature type="region of interest" description="Disordered" evidence="2">
    <location>
        <begin position="1"/>
        <end position="25"/>
    </location>
</feature>
<protein>
    <recommendedName>
        <fullName evidence="1">Large ribosomal subunit protein bL28</fullName>
    </recommendedName>
    <alternativeName>
        <fullName evidence="3">50S ribosomal protein L28</fullName>
    </alternativeName>
</protein>